<evidence type="ECO:0000255" key="1"/>
<evidence type="ECO:0000255" key="2">
    <source>
        <dbReference type="PROSITE-ProRule" id="PRU00714"/>
    </source>
</evidence>
<evidence type="ECO:0000256" key="3">
    <source>
        <dbReference type="SAM" id="MobiDB-lite"/>
    </source>
</evidence>
<evidence type="ECO:0000269" key="4">
    <source>
    </source>
</evidence>
<evidence type="ECO:0000305" key="5"/>
<evidence type="ECO:0007744" key="6">
    <source>
    </source>
</evidence>
<proteinExistence type="evidence at protein level"/>
<dbReference type="EMBL" id="X56909">
    <property type="protein sequence ID" value="CAA40229.1"/>
    <property type="molecule type" value="Genomic_DNA"/>
</dbReference>
<dbReference type="EMBL" id="X59720">
    <property type="protein sequence ID" value="CAA42304.2"/>
    <property type="molecule type" value="Genomic_DNA"/>
</dbReference>
<dbReference type="EMBL" id="BK006937">
    <property type="protein sequence ID" value="DAA07516.1"/>
    <property type="molecule type" value="Genomic_DNA"/>
</dbReference>
<dbReference type="PIR" id="S12919">
    <property type="entry name" value="MMBY7C"/>
</dbReference>
<dbReference type="RefSeq" id="NP_009966.2">
    <property type="nucleotide sequence ID" value="NM_001178751.1"/>
</dbReference>
<dbReference type="SMR" id="P25360"/>
<dbReference type="BioGRID" id="31020">
    <property type="interactions" value="90"/>
</dbReference>
<dbReference type="DIP" id="DIP-7842N"/>
<dbReference type="FunCoup" id="P25360">
    <property type="interactions" value="131"/>
</dbReference>
<dbReference type="IntAct" id="P25360">
    <property type="interactions" value="12"/>
</dbReference>
<dbReference type="MINT" id="P25360"/>
<dbReference type="STRING" id="4932.YCR037C"/>
<dbReference type="TCDB" id="2.A.47.2.1">
    <property type="family name" value="the divalent anion:na(+) symporter (dass) family"/>
</dbReference>
<dbReference type="GlyCosmos" id="P25360">
    <property type="glycosylation" value="3 sites, No reported glycans"/>
</dbReference>
<dbReference type="GlyGen" id="P25360">
    <property type="glycosylation" value="3 sites"/>
</dbReference>
<dbReference type="iPTMnet" id="P25360"/>
<dbReference type="PaxDb" id="4932-YCR037C"/>
<dbReference type="PeptideAtlas" id="P25360"/>
<dbReference type="EnsemblFungi" id="YCR037C_mRNA">
    <property type="protein sequence ID" value="YCR037C"/>
    <property type="gene ID" value="YCR037C"/>
</dbReference>
<dbReference type="GeneID" id="850403"/>
<dbReference type="KEGG" id="sce:YCR037C"/>
<dbReference type="AGR" id="SGD:S000000633"/>
<dbReference type="SGD" id="S000000633">
    <property type="gene designation" value="PHO87"/>
</dbReference>
<dbReference type="VEuPathDB" id="FungiDB:YCR037C"/>
<dbReference type="eggNOG" id="KOG1281">
    <property type="taxonomic scope" value="Eukaryota"/>
</dbReference>
<dbReference type="GeneTree" id="ENSGT01030000234550"/>
<dbReference type="HOGENOM" id="CLU_005170_8_0_1"/>
<dbReference type="InParanoid" id="P25360"/>
<dbReference type="OMA" id="NQYYNFR"/>
<dbReference type="OrthoDB" id="10260443at2759"/>
<dbReference type="BioCyc" id="MetaCyc:G3O-29349-MONOMER"/>
<dbReference type="BioCyc" id="YEAST:G3O-29349-MONOMER"/>
<dbReference type="BRENDA" id="7.3.2.1">
    <property type="organism ID" value="984"/>
</dbReference>
<dbReference type="BioGRID-ORCS" id="850403">
    <property type="hits" value="6 hits in 10 CRISPR screens"/>
</dbReference>
<dbReference type="PRO" id="PR:P25360"/>
<dbReference type="Proteomes" id="UP000002311">
    <property type="component" value="Chromosome III"/>
</dbReference>
<dbReference type="RNAct" id="P25360">
    <property type="molecule type" value="protein"/>
</dbReference>
<dbReference type="GO" id="GO:0071944">
    <property type="term" value="C:cell periphery"/>
    <property type="evidence" value="ECO:0007005"/>
    <property type="project" value="SGD"/>
</dbReference>
<dbReference type="GO" id="GO:0005886">
    <property type="term" value="C:plasma membrane"/>
    <property type="evidence" value="ECO:0000314"/>
    <property type="project" value="SGD"/>
</dbReference>
<dbReference type="GO" id="GO:0005315">
    <property type="term" value="F:phosphate transmembrane transporter activity"/>
    <property type="evidence" value="ECO:0000316"/>
    <property type="project" value="SGD"/>
</dbReference>
<dbReference type="GO" id="GO:0006817">
    <property type="term" value="P:phosphate ion transport"/>
    <property type="evidence" value="ECO:0000316"/>
    <property type="project" value="SGD"/>
</dbReference>
<dbReference type="GO" id="GO:0097080">
    <property type="term" value="P:plasma membrane selenite transport"/>
    <property type="evidence" value="ECO:0000315"/>
    <property type="project" value="SGD"/>
</dbReference>
<dbReference type="GO" id="GO:0006797">
    <property type="term" value="P:polyphosphate metabolic process"/>
    <property type="evidence" value="ECO:0000315"/>
    <property type="project" value="SGD"/>
</dbReference>
<dbReference type="GO" id="GO:2000185">
    <property type="term" value="P:regulation of phosphate transmembrane transport"/>
    <property type="evidence" value="ECO:0000316"/>
    <property type="project" value="SGD"/>
</dbReference>
<dbReference type="GO" id="GO:0055085">
    <property type="term" value="P:transmembrane transport"/>
    <property type="evidence" value="ECO:0000318"/>
    <property type="project" value="GO_Central"/>
</dbReference>
<dbReference type="CDD" id="cd01115">
    <property type="entry name" value="SLC13_permease"/>
    <property type="match status" value="1"/>
</dbReference>
<dbReference type="CDD" id="cd14478">
    <property type="entry name" value="SPX_PHO87_PHO90_like"/>
    <property type="match status" value="1"/>
</dbReference>
<dbReference type="InterPro" id="IPR004680">
    <property type="entry name" value="Cit_transptr-like_dom"/>
</dbReference>
<dbReference type="InterPro" id="IPR004331">
    <property type="entry name" value="SPX_dom"/>
</dbReference>
<dbReference type="PANTHER" id="PTHR10283:SF110">
    <property type="entry name" value="INORGANIC PHOSPHATE TRANSPORTER PHO87-RELATED"/>
    <property type="match status" value="1"/>
</dbReference>
<dbReference type="PANTHER" id="PTHR10283">
    <property type="entry name" value="SOLUTE CARRIER FAMILY 13 MEMBER"/>
    <property type="match status" value="1"/>
</dbReference>
<dbReference type="Pfam" id="PF03600">
    <property type="entry name" value="CitMHS"/>
    <property type="match status" value="1"/>
</dbReference>
<dbReference type="Pfam" id="PF03105">
    <property type="entry name" value="SPX"/>
    <property type="match status" value="1"/>
</dbReference>
<dbReference type="PROSITE" id="PS51382">
    <property type="entry name" value="SPX"/>
    <property type="match status" value="1"/>
</dbReference>
<protein>
    <recommendedName>
        <fullName>Inorganic phosphate transporter PHO87</fullName>
    </recommendedName>
</protein>
<feature type="chain" id="PRO_0000172517" description="Inorganic phosphate transporter PHO87">
    <location>
        <begin position="1"/>
        <end position="923"/>
    </location>
</feature>
<feature type="topological domain" description="Extracellular" evidence="1">
    <location>
        <begin position="1"/>
        <end position="461"/>
    </location>
</feature>
<feature type="transmembrane region" description="Helical" evidence="1">
    <location>
        <begin position="462"/>
        <end position="482"/>
    </location>
</feature>
<feature type="topological domain" description="Cytoplasmic" evidence="1">
    <location>
        <begin position="483"/>
        <end position="493"/>
    </location>
</feature>
<feature type="transmembrane region" description="Helical" evidence="1">
    <location>
        <begin position="494"/>
        <end position="514"/>
    </location>
</feature>
<feature type="topological domain" description="Extracellular" evidence="1">
    <location>
        <begin position="515"/>
        <end position="537"/>
    </location>
</feature>
<feature type="transmembrane region" description="Helical" evidence="1">
    <location>
        <begin position="538"/>
        <end position="558"/>
    </location>
</feature>
<feature type="topological domain" description="Cytoplasmic" evidence="1">
    <location>
        <begin position="559"/>
        <end position="583"/>
    </location>
</feature>
<feature type="transmembrane region" description="Helical" evidence="1">
    <location>
        <begin position="584"/>
        <end position="604"/>
    </location>
</feature>
<feature type="topological domain" description="Extracellular" evidence="1">
    <location>
        <begin position="605"/>
        <end position="627"/>
    </location>
</feature>
<feature type="transmembrane region" description="Helical" evidence="1">
    <location>
        <begin position="628"/>
        <end position="648"/>
    </location>
</feature>
<feature type="topological domain" description="Cytoplasmic" evidence="1">
    <location>
        <begin position="649"/>
        <end position="667"/>
    </location>
</feature>
<feature type="transmembrane region" description="Helical" evidence="1">
    <location>
        <begin position="668"/>
        <end position="688"/>
    </location>
</feature>
<feature type="topological domain" description="Extracellular" evidence="1">
    <location>
        <begin position="689"/>
        <end position="707"/>
    </location>
</feature>
<feature type="transmembrane region" description="Helical" evidence="1">
    <location>
        <begin position="708"/>
        <end position="728"/>
    </location>
</feature>
<feature type="topological domain" description="Cytoplasmic" evidence="1">
    <location>
        <begin position="729"/>
        <end position="735"/>
    </location>
</feature>
<feature type="transmembrane region" description="Helical" evidence="1">
    <location>
        <begin position="736"/>
        <end position="756"/>
    </location>
</feature>
<feature type="topological domain" description="Extracellular" evidence="1">
    <location>
        <begin position="757"/>
        <end position="767"/>
    </location>
</feature>
<feature type="transmembrane region" description="Helical" evidence="1">
    <location>
        <begin position="768"/>
        <end position="788"/>
    </location>
</feature>
<feature type="topological domain" description="Cytoplasmic" evidence="1">
    <location>
        <begin position="789"/>
        <end position="802"/>
    </location>
</feature>
<feature type="transmembrane region" description="Helical" evidence="1">
    <location>
        <begin position="803"/>
        <end position="823"/>
    </location>
</feature>
<feature type="topological domain" description="Extracellular" evidence="1">
    <location>
        <begin position="824"/>
        <end position="849"/>
    </location>
</feature>
<feature type="transmembrane region" description="Helical" evidence="1">
    <location>
        <begin position="850"/>
        <end position="870"/>
    </location>
</feature>
<feature type="topological domain" description="Cytoplasmic" evidence="1">
    <location>
        <begin position="871"/>
        <end position="898"/>
    </location>
</feature>
<feature type="transmembrane region" description="Helical" evidence="1">
    <location>
        <begin position="899"/>
        <end position="919"/>
    </location>
</feature>
<feature type="topological domain" description="Extracellular" evidence="1">
    <location>
        <begin position="920"/>
        <end position="923"/>
    </location>
</feature>
<feature type="domain" description="SPX" evidence="2">
    <location>
        <begin position="1"/>
        <end position="334"/>
    </location>
</feature>
<feature type="region of interest" description="Disordered" evidence="3">
    <location>
        <begin position="40"/>
        <end position="74"/>
    </location>
</feature>
<feature type="region of interest" description="Disordered" evidence="3">
    <location>
        <begin position="86"/>
        <end position="107"/>
    </location>
</feature>
<feature type="compositionally biased region" description="Basic and acidic residues" evidence="3">
    <location>
        <begin position="95"/>
        <end position="104"/>
    </location>
</feature>
<feature type="glycosylation site" description="N-linked (GlcNAc...) asparagine" evidence="1">
    <location>
        <position position="162"/>
    </location>
</feature>
<feature type="glycosylation site" description="N-linked (GlcNAc...) asparagine" evidence="1">
    <location>
        <position position="202"/>
    </location>
</feature>
<feature type="glycosylation site" description="N-linked (GlcNAc...) asparagine" evidence="1">
    <location>
        <position position="274"/>
    </location>
</feature>
<feature type="cross-link" description="Glycyl lysine isopeptide (Lys-Gly) (interchain with G-Cter in ubiquitin)" evidence="6">
    <location>
        <position position="102"/>
    </location>
</feature>
<feature type="sequence conflict" description="In Ref. 1; CAA40229." evidence="5" ref="1">
    <original>S</original>
    <variation>P</variation>
    <location>
        <position position="72"/>
    </location>
</feature>
<name>PHO87_YEAST</name>
<accession>P25360</accession>
<accession>D6VR47</accession>
<keyword id="KW-0325">Glycoprotein</keyword>
<keyword id="KW-1017">Isopeptide bond</keyword>
<keyword id="KW-0472">Membrane</keyword>
<keyword id="KW-0592">Phosphate transport</keyword>
<keyword id="KW-1185">Reference proteome</keyword>
<keyword id="KW-0812">Transmembrane</keyword>
<keyword id="KW-1133">Transmembrane helix</keyword>
<keyword id="KW-0813">Transport</keyword>
<keyword id="KW-0832">Ubl conjugation</keyword>
<sequence length="923" mass="102540">MRFSHFLKYNAVPEWQNHYLDYNELKNLIYTLQTDELKQETPTGDLNDDADSQTPGPIADIESNIAAGEPSSSKRRFTHKLKRKLFGSKTPSGSKRGDSDEKAIDGNNINEETIELDELSPQGKTTSFNKNFIRKKFFESRSSSVSSEGKTLFSSYDTFVTNLSDEKLKVDDFYKRMEAKFYERFDHLINDLEKEGIVTRLNETFNPEIQALPPLREIISGTSETHSSNNPFEIHSSNIDSELRNRFDYSEEEMDEDDDVDVFADTTDNTALLNYSQFNIKSQKKSLLKQTIINLYIDLCQLKSFIELNRMGFSKITKKSDKVLHMNTRQELIESEEFFKDTYIFQHETLSSLNSKIAQLIEFYAVLMGQPGNVDSCKQELKSYLHDHIVWERSNTWKDMLGLSSQNNDIITIEDEAEKLMQEKLQIEYFKYPLPKPINLKFTKIENLAVPKLFFGKRAMKIGFIIIVTGVLLGVKTFNDPVEHRCMALVECCAFLWASEAIPLHITGLLVPLLTVLFRVLKDDDGKVMGAAAASTEILGTMWSSTIMILLAGFTLGEALSQYNVAKVLASWLLALAGTKPRNVLLMAMSVVFFLSMWISNVASPVLTYSLLTPLLDPLDYTSPFAKALVMGVALSADIGGMASPISSPQNIISMQYLKPYGIGWGQFFAVALPTGILSMLCSWALMILTFKIGKTKLEKFKPIRTRFTIKQYFIIIVTIATILLWCVESQIESAFGSSGEIAVIPIVLFFGTGLLSTKDFNTFPWSIVVLAMGGIALGKAVSSSGLLVTIARALQKKIQNDGVFAILCIFGILMLVVGTFVSHTVSAIIIIPLVQEVGDKLSDPKAAPILVFGCALLASCGMGLASSGFPNVTAISMTDKKGNRWLTVGAFISRGVPASLLAFVCVITLGYGISSSVLKGST</sequence>
<reference key="1">
    <citation type="journal article" date="1990" name="Yeast">
        <title>The complete sequence of the 8.2 kb segment left of MAT on chromosome III reveals five ORFs, including a gene for a yeast ribokinase.</title>
        <authorList>
            <person name="Thierry A."/>
            <person name="Fairhead C."/>
            <person name="Dujon B."/>
        </authorList>
    </citation>
    <scope>NUCLEOTIDE SEQUENCE [GENOMIC DNA]</scope>
    <source>
        <strain>ATCC 96604 / S288c / FY1679</strain>
    </source>
</reference>
<reference key="2">
    <citation type="journal article" date="1992" name="Nature">
        <title>The complete DNA sequence of yeast chromosome III.</title>
        <authorList>
            <person name="Oliver S.G."/>
            <person name="van der Aart Q.J.M."/>
            <person name="Agostoni-Carbone M.L."/>
            <person name="Aigle M."/>
            <person name="Alberghina L."/>
            <person name="Alexandraki D."/>
            <person name="Antoine G."/>
            <person name="Anwar R."/>
            <person name="Ballesta J.P.G."/>
            <person name="Benit P."/>
            <person name="Berben G."/>
            <person name="Bergantino E."/>
            <person name="Biteau N."/>
            <person name="Bolle P.-A."/>
            <person name="Bolotin-Fukuhara M."/>
            <person name="Brown A."/>
            <person name="Brown A.J.P."/>
            <person name="Buhler J.-M."/>
            <person name="Carcano C."/>
            <person name="Carignani G."/>
            <person name="Cederberg H."/>
            <person name="Chanet R."/>
            <person name="Contreras R."/>
            <person name="Crouzet M."/>
            <person name="Daignan-Fornier B."/>
            <person name="Defoor E."/>
            <person name="Delgado M.D."/>
            <person name="Demolder J."/>
            <person name="Doira C."/>
            <person name="Dubois E."/>
            <person name="Dujon B."/>
            <person name="Duesterhoeft A."/>
            <person name="Erdmann D."/>
            <person name="Esteban M."/>
            <person name="Fabre F."/>
            <person name="Fairhead C."/>
            <person name="Faye G."/>
            <person name="Feldmann H."/>
            <person name="Fiers W."/>
            <person name="Francingues-Gaillard M.-C."/>
            <person name="Franco L."/>
            <person name="Frontali L."/>
            <person name="Fukuhara H."/>
            <person name="Fuller L.J."/>
            <person name="Galland P."/>
            <person name="Gent M.E."/>
            <person name="Gigot D."/>
            <person name="Gilliquet V."/>
            <person name="Glansdorff N."/>
            <person name="Goffeau A."/>
            <person name="Grenson M."/>
            <person name="Grisanti P."/>
            <person name="Grivell L.A."/>
            <person name="de Haan M."/>
            <person name="Haasemann M."/>
            <person name="Hatat D."/>
            <person name="Hoenicka J."/>
            <person name="Hegemann J.H."/>
            <person name="Herbert C.J."/>
            <person name="Hilger F."/>
            <person name="Hohmann S."/>
            <person name="Hollenberg C.P."/>
            <person name="Huse K."/>
            <person name="Iborra F."/>
            <person name="Indge K.J."/>
            <person name="Isono K."/>
            <person name="Jacq C."/>
            <person name="Jacquet M."/>
            <person name="James C.M."/>
            <person name="Jauniaux J.-C."/>
            <person name="Jia Y."/>
            <person name="Jimenez A."/>
            <person name="Kelly A."/>
            <person name="Kleinhans U."/>
            <person name="Kreisl P."/>
            <person name="Lanfranchi G."/>
            <person name="Lewis C."/>
            <person name="van der Linden C.G."/>
            <person name="Lucchini G."/>
            <person name="Lutzenkirchen K."/>
            <person name="Maat M.J."/>
            <person name="Mallet L."/>
            <person name="Mannhaupt G."/>
            <person name="Martegani E."/>
            <person name="Mathieu A."/>
            <person name="Maurer C.T.C."/>
            <person name="McConnell D."/>
            <person name="McKee R.A."/>
            <person name="Messenguy F."/>
            <person name="Mewes H.-W."/>
            <person name="Molemans F."/>
            <person name="Montague M.A."/>
            <person name="Muzi Falconi M."/>
            <person name="Navas L."/>
            <person name="Newlon C.S."/>
            <person name="Noone D."/>
            <person name="Pallier C."/>
            <person name="Panzeri L."/>
            <person name="Pearson B.M."/>
            <person name="Perea J."/>
            <person name="Philippsen P."/>
            <person name="Pierard A."/>
            <person name="Planta R.J."/>
            <person name="Plevani P."/>
            <person name="Poetsch B."/>
            <person name="Pohl F.M."/>
            <person name="Purnelle B."/>
            <person name="Ramezani Rad M."/>
            <person name="Rasmussen S.W."/>
            <person name="Raynal A."/>
            <person name="Remacha M.A."/>
            <person name="Richterich P."/>
            <person name="Roberts A.B."/>
            <person name="Rodriguez F."/>
            <person name="Sanz E."/>
            <person name="Schaaff-Gerstenschlaeger I."/>
            <person name="Scherens B."/>
            <person name="Schweitzer B."/>
            <person name="Shu Y."/>
            <person name="Skala J."/>
            <person name="Slonimski P.P."/>
            <person name="Sor F."/>
            <person name="Soustelle C."/>
            <person name="Spiegelberg R."/>
            <person name="Stateva L.I."/>
            <person name="Steensma H.Y."/>
            <person name="Steiner S."/>
            <person name="Thierry A."/>
            <person name="Thireos G."/>
            <person name="Tzermia M."/>
            <person name="Urrestarazu L.A."/>
            <person name="Valle G."/>
            <person name="Vetter I."/>
            <person name="van Vliet-Reedijk J.C."/>
            <person name="Voet M."/>
            <person name="Volckaert G."/>
            <person name="Vreken P."/>
            <person name="Wang H."/>
            <person name="Warmington J.R."/>
            <person name="von Wettstein D."/>
            <person name="Wicksteed B.L."/>
            <person name="Wilson C."/>
            <person name="Wurst H."/>
            <person name="Xu G."/>
            <person name="Yoshikawa A."/>
            <person name="Zimmermann F.K."/>
            <person name="Sgouros J.G."/>
        </authorList>
    </citation>
    <scope>NUCLEOTIDE SEQUENCE [LARGE SCALE GENOMIC DNA]</scope>
    <source>
        <strain>ATCC 204508 / S288c</strain>
    </source>
</reference>
<reference key="3">
    <citation type="submission" date="2001-06" db="EMBL/GenBank/DDBJ databases">
        <authorList>
            <person name="Valles G."/>
            <person name="Volckaerts G."/>
        </authorList>
    </citation>
    <scope>SEQUENCE REVISION TO 72</scope>
</reference>
<reference key="4">
    <citation type="journal article" date="2014" name="G3 (Bethesda)">
        <title>The reference genome sequence of Saccharomyces cerevisiae: Then and now.</title>
        <authorList>
            <person name="Engel S.R."/>
            <person name="Dietrich F.S."/>
            <person name="Fisk D.G."/>
            <person name="Binkley G."/>
            <person name="Balakrishnan R."/>
            <person name="Costanzo M.C."/>
            <person name="Dwight S.S."/>
            <person name="Hitz B.C."/>
            <person name="Karra K."/>
            <person name="Nash R.S."/>
            <person name="Weng S."/>
            <person name="Wong E.D."/>
            <person name="Lloyd P."/>
            <person name="Skrzypek M.S."/>
            <person name="Miyasato S.R."/>
            <person name="Simison M."/>
            <person name="Cherry J.M."/>
        </authorList>
    </citation>
    <scope>GENOME REANNOTATION</scope>
    <source>
        <strain>ATCC 204508 / S288c</strain>
    </source>
</reference>
<reference key="5">
    <citation type="journal article" date="1996" name="Curr. Genet.">
        <title>Two new genes, PHO86 and PHO87, involved in inorganic phosphate uptake in Saccharomyces cerevisiae.</title>
        <authorList>
            <person name="Bun-Ya M."/>
            <person name="Shikata K."/>
            <person name="Nakade S."/>
            <person name="Yompakdee C."/>
            <person name="Harashima S."/>
            <person name="Oshima Y."/>
        </authorList>
    </citation>
    <scope>CHARACTERIZATION</scope>
</reference>
<reference key="6">
    <citation type="journal article" date="2003" name="Nature">
        <title>Global analysis of protein expression in yeast.</title>
        <authorList>
            <person name="Ghaemmaghami S."/>
            <person name="Huh W.-K."/>
            <person name="Bower K."/>
            <person name="Howson R.W."/>
            <person name="Belle A."/>
            <person name="Dephoure N."/>
            <person name="O'Shea E.K."/>
            <person name="Weissman J.S."/>
        </authorList>
    </citation>
    <scope>LEVEL OF PROTEIN EXPRESSION [LARGE SCALE ANALYSIS]</scope>
</reference>
<reference key="7">
    <citation type="journal article" date="2003" name="Nat. Biotechnol.">
        <title>A proteomics approach to understanding protein ubiquitination.</title>
        <authorList>
            <person name="Peng J."/>
            <person name="Schwartz D."/>
            <person name="Elias J.E."/>
            <person name="Thoreen C.C."/>
            <person name="Cheng D."/>
            <person name="Marsischky G."/>
            <person name="Roelofs J."/>
            <person name="Finley D."/>
            <person name="Gygi S.P."/>
        </authorList>
    </citation>
    <scope>UBIQUITINATION [LARGE SCALE ANALYSIS] AT LYS-102</scope>
    <scope>IDENTIFICATION BY MASS SPECTROMETRY</scope>
    <source>
        <strain>SUB592</strain>
    </source>
</reference>
<reference key="8">
    <citation type="journal article" date="2006" name="Proc. Natl. Acad. Sci. U.S.A.">
        <title>A global topology map of the Saccharomyces cerevisiae membrane proteome.</title>
        <authorList>
            <person name="Kim H."/>
            <person name="Melen K."/>
            <person name="Oesterberg M."/>
            <person name="von Heijne G."/>
        </authorList>
    </citation>
    <scope>TOPOLOGY [LARGE SCALE ANALYSIS]</scope>
    <source>
        <strain>ATCC 208353 / W303-1A</strain>
    </source>
</reference>
<reference key="9">
    <citation type="journal article" date="2012" name="Proteomics">
        <title>Sites of ubiquitin attachment in Saccharomyces cerevisiae.</title>
        <authorList>
            <person name="Starita L.M."/>
            <person name="Lo R.S."/>
            <person name="Eng J.K."/>
            <person name="von Haller P.D."/>
            <person name="Fields S."/>
        </authorList>
    </citation>
    <scope>UBIQUITINATION [LARGE SCALE ANALYSIS] AT LYS-102</scope>
    <scope>IDENTIFICATION BY MASS SPECTROMETRY [LARGE SCALE ANALYSIS]</scope>
</reference>
<organism>
    <name type="scientific">Saccharomyces cerevisiae (strain ATCC 204508 / S288c)</name>
    <name type="common">Baker's yeast</name>
    <dbReference type="NCBI Taxonomy" id="559292"/>
    <lineage>
        <taxon>Eukaryota</taxon>
        <taxon>Fungi</taxon>
        <taxon>Dikarya</taxon>
        <taxon>Ascomycota</taxon>
        <taxon>Saccharomycotina</taxon>
        <taxon>Saccharomycetes</taxon>
        <taxon>Saccharomycetales</taxon>
        <taxon>Saccharomycetaceae</taxon>
        <taxon>Saccharomyces</taxon>
    </lineage>
</organism>
<gene>
    <name type="primary">PHO87</name>
    <name type="ordered locus">YCR037C</name>
    <name type="ORF">YCR37C</name>
    <name type="ORF">YCR524</name>
</gene>
<comment type="function">
    <text>Involved in the uptake of inorganic phosphate.</text>
</comment>
<comment type="subcellular location">
    <subcellularLocation>
        <location>Membrane</location>
        <topology>Multi-pass membrane protein</topology>
    </subcellularLocation>
</comment>
<comment type="miscellaneous">
    <text evidence="4">Present with 504 molecules/cell in log phase SD medium.</text>
</comment>
<comment type="similarity">
    <text evidence="5">Belongs to the CitM (TC 2.A.11) transporter family.</text>
</comment>